<protein>
    <recommendedName>
        <fullName>Mitochondrial succinate-fumarate transporter 1</fullName>
        <shortName>AtMSFC1</shortName>
    </recommendedName>
</protein>
<reference key="1">
    <citation type="journal article" date="2000" name="Nature">
        <title>Sequence and analysis of chromosome 5 of the plant Arabidopsis thaliana.</title>
        <authorList>
            <person name="Tabata S."/>
            <person name="Kaneko T."/>
            <person name="Nakamura Y."/>
            <person name="Kotani H."/>
            <person name="Kato T."/>
            <person name="Asamizu E."/>
            <person name="Miyajima N."/>
            <person name="Sasamoto S."/>
            <person name="Kimura T."/>
            <person name="Hosouchi T."/>
            <person name="Kawashima K."/>
            <person name="Kohara M."/>
            <person name="Matsumoto M."/>
            <person name="Matsuno A."/>
            <person name="Muraki A."/>
            <person name="Nakayama S."/>
            <person name="Nakazaki N."/>
            <person name="Naruo K."/>
            <person name="Okumura S."/>
            <person name="Shinpo S."/>
            <person name="Takeuchi C."/>
            <person name="Wada T."/>
            <person name="Watanabe A."/>
            <person name="Yamada M."/>
            <person name="Yasuda M."/>
            <person name="Sato S."/>
            <person name="de la Bastide M."/>
            <person name="Huang E."/>
            <person name="Spiegel L."/>
            <person name="Gnoj L."/>
            <person name="O'Shaughnessy A."/>
            <person name="Preston R."/>
            <person name="Habermann K."/>
            <person name="Murray J."/>
            <person name="Johnson D."/>
            <person name="Rohlfing T."/>
            <person name="Nelson J."/>
            <person name="Stoneking T."/>
            <person name="Pepin K."/>
            <person name="Spieth J."/>
            <person name="Sekhon M."/>
            <person name="Armstrong J."/>
            <person name="Becker M."/>
            <person name="Belter E."/>
            <person name="Cordum H."/>
            <person name="Cordes M."/>
            <person name="Courtney L."/>
            <person name="Courtney W."/>
            <person name="Dante M."/>
            <person name="Du H."/>
            <person name="Edwards J."/>
            <person name="Fryman J."/>
            <person name="Haakensen B."/>
            <person name="Lamar E."/>
            <person name="Latreille P."/>
            <person name="Leonard S."/>
            <person name="Meyer R."/>
            <person name="Mulvaney E."/>
            <person name="Ozersky P."/>
            <person name="Riley A."/>
            <person name="Strowmatt C."/>
            <person name="Wagner-McPherson C."/>
            <person name="Wollam A."/>
            <person name="Yoakum M."/>
            <person name="Bell M."/>
            <person name="Dedhia N."/>
            <person name="Parnell L."/>
            <person name="Shah R."/>
            <person name="Rodriguez M."/>
            <person name="Hoon See L."/>
            <person name="Vil D."/>
            <person name="Baker J."/>
            <person name="Kirchoff K."/>
            <person name="Toth K."/>
            <person name="King L."/>
            <person name="Bahret A."/>
            <person name="Miller B."/>
            <person name="Marra M.A."/>
            <person name="Martienssen R."/>
            <person name="McCombie W.R."/>
            <person name="Wilson R.K."/>
            <person name="Murphy G."/>
            <person name="Bancroft I."/>
            <person name="Volckaert G."/>
            <person name="Wambutt R."/>
            <person name="Duesterhoeft A."/>
            <person name="Stiekema W."/>
            <person name="Pohl T."/>
            <person name="Entian K.-D."/>
            <person name="Terryn N."/>
            <person name="Hartley N."/>
            <person name="Bent E."/>
            <person name="Johnson S."/>
            <person name="Langham S.-A."/>
            <person name="McCullagh B."/>
            <person name="Robben J."/>
            <person name="Grymonprez B."/>
            <person name="Zimmermann W."/>
            <person name="Ramsperger U."/>
            <person name="Wedler H."/>
            <person name="Balke K."/>
            <person name="Wedler E."/>
            <person name="Peters S."/>
            <person name="van Staveren M."/>
            <person name="Dirkse W."/>
            <person name="Mooijman P."/>
            <person name="Klein Lankhorst R."/>
            <person name="Weitzenegger T."/>
            <person name="Bothe G."/>
            <person name="Rose M."/>
            <person name="Hauf J."/>
            <person name="Berneiser S."/>
            <person name="Hempel S."/>
            <person name="Feldpausch M."/>
            <person name="Lamberth S."/>
            <person name="Villarroel R."/>
            <person name="Gielen J."/>
            <person name="Ardiles W."/>
            <person name="Bents O."/>
            <person name="Lemcke K."/>
            <person name="Kolesov G."/>
            <person name="Mayer K.F.X."/>
            <person name="Rudd S."/>
            <person name="Schoof H."/>
            <person name="Schueller C."/>
            <person name="Zaccaria P."/>
            <person name="Mewes H.-W."/>
            <person name="Bevan M."/>
            <person name="Fransz P.F."/>
        </authorList>
    </citation>
    <scope>NUCLEOTIDE SEQUENCE [LARGE SCALE GENOMIC DNA]</scope>
    <source>
        <strain>cv. Columbia</strain>
    </source>
</reference>
<reference key="2">
    <citation type="journal article" date="2017" name="Plant J.">
        <title>Araport11: a complete reannotation of the Arabidopsis thaliana reference genome.</title>
        <authorList>
            <person name="Cheng C.Y."/>
            <person name="Krishnakumar V."/>
            <person name="Chan A.P."/>
            <person name="Thibaud-Nissen F."/>
            <person name="Schobel S."/>
            <person name="Town C.D."/>
        </authorList>
    </citation>
    <scope>GENOME REANNOTATION</scope>
    <source>
        <strain>cv. Columbia</strain>
    </source>
</reference>
<reference key="3">
    <citation type="journal article" date="2003" name="Science">
        <title>Empirical analysis of transcriptional activity in the Arabidopsis genome.</title>
        <authorList>
            <person name="Yamada K."/>
            <person name="Lim J."/>
            <person name="Dale J.M."/>
            <person name="Chen H."/>
            <person name="Shinn P."/>
            <person name="Palm C.J."/>
            <person name="Southwick A.M."/>
            <person name="Wu H.C."/>
            <person name="Kim C.J."/>
            <person name="Nguyen M."/>
            <person name="Pham P.K."/>
            <person name="Cheuk R.F."/>
            <person name="Karlin-Newmann G."/>
            <person name="Liu S.X."/>
            <person name="Lam B."/>
            <person name="Sakano H."/>
            <person name="Wu T."/>
            <person name="Yu G."/>
            <person name="Miranda M."/>
            <person name="Quach H.L."/>
            <person name="Tripp M."/>
            <person name="Chang C.H."/>
            <person name="Lee J.M."/>
            <person name="Toriumi M.J."/>
            <person name="Chan M.M."/>
            <person name="Tang C.C."/>
            <person name="Onodera C.S."/>
            <person name="Deng J.M."/>
            <person name="Akiyama K."/>
            <person name="Ansari Y."/>
            <person name="Arakawa T."/>
            <person name="Banh J."/>
            <person name="Banno F."/>
            <person name="Bowser L."/>
            <person name="Brooks S.Y."/>
            <person name="Carninci P."/>
            <person name="Chao Q."/>
            <person name="Choy N."/>
            <person name="Enju A."/>
            <person name="Goldsmith A.D."/>
            <person name="Gurjal M."/>
            <person name="Hansen N.F."/>
            <person name="Hayashizaki Y."/>
            <person name="Johnson-Hopson C."/>
            <person name="Hsuan V.W."/>
            <person name="Iida K."/>
            <person name="Karnes M."/>
            <person name="Khan S."/>
            <person name="Koesema E."/>
            <person name="Ishida J."/>
            <person name="Jiang P.X."/>
            <person name="Jones T."/>
            <person name="Kawai J."/>
            <person name="Kamiya A."/>
            <person name="Meyers C."/>
            <person name="Nakajima M."/>
            <person name="Narusaka M."/>
            <person name="Seki M."/>
            <person name="Sakurai T."/>
            <person name="Satou M."/>
            <person name="Tamse R."/>
            <person name="Vaysberg M."/>
            <person name="Wallender E.K."/>
            <person name="Wong C."/>
            <person name="Yamamura Y."/>
            <person name="Yuan S."/>
            <person name="Shinozaki K."/>
            <person name="Davis R.W."/>
            <person name="Theologis A."/>
            <person name="Ecker J.R."/>
        </authorList>
    </citation>
    <scope>NUCLEOTIDE SEQUENCE [LARGE SCALE MRNA]</scope>
    <source>
        <strain>cv. Columbia</strain>
    </source>
</reference>
<reference key="4">
    <citation type="submission" date="2002-03" db="EMBL/GenBank/DDBJ databases">
        <title>Full-length cDNA from Arabidopsis thaliana.</title>
        <authorList>
            <person name="Brover V.V."/>
            <person name="Troukhan M.E."/>
            <person name="Alexandrov N.A."/>
            <person name="Lu Y.-P."/>
            <person name="Flavell R.B."/>
            <person name="Feldmann K.A."/>
        </authorList>
    </citation>
    <scope>NUCLEOTIDE SEQUENCE [LARGE SCALE MRNA]</scope>
</reference>
<reference key="5">
    <citation type="journal article" date="2003" name="FEBS Lett.">
        <title>Identification of an Arabidopsis mitochondrial succinate-fumarate translocator.</title>
        <authorList>
            <person name="Catoni E."/>
            <person name="Schwab R."/>
            <person name="Hilpert M."/>
            <person name="Desimone M."/>
            <person name="Schwacke R."/>
            <person name="Fluegge U.I."/>
            <person name="Schumacher K."/>
            <person name="Frommer W.B."/>
        </authorList>
    </citation>
    <scope>FUNCTION</scope>
    <scope>TISSUE SPECIFICITY</scope>
</reference>
<reference key="6">
    <citation type="journal article" date="2004" name="Trends Plant Sci.">
        <title>The growing family of mitochondrial carriers in Arabidopsis.</title>
        <authorList>
            <person name="Picault N."/>
            <person name="Hodges M."/>
            <person name="Palmieri L."/>
            <person name="Palmieri F."/>
        </authorList>
    </citation>
    <scope>GENE FAMILY</scope>
</reference>
<name>SFC1_ARATH</name>
<keyword id="KW-0472">Membrane</keyword>
<keyword id="KW-0496">Mitochondrion</keyword>
<keyword id="KW-0999">Mitochondrion inner membrane</keyword>
<keyword id="KW-1185">Reference proteome</keyword>
<keyword id="KW-0677">Repeat</keyword>
<keyword id="KW-0812">Transmembrane</keyword>
<keyword id="KW-1133">Transmembrane helix</keyword>
<keyword id="KW-0813">Transport</keyword>
<organism>
    <name type="scientific">Arabidopsis thaliana</name>
    <name type="common">Mouse-ear cress</name>
    <dbReference type="NCBI Taxonomy" id="3702"/>
    <lineage>
        <taxon>Eukaryota</taxon>
        <taxon>Viridiplantae</taxon>
        <taxon>Streptophyta</taxon>
        <taxon>Embryophyta</taxon>
        <taxon>Tracheophyta</taxon>
        <taxon>Spermatophyta</taxon>
        <taxon>Magnoliopsida</taxon>
        <taxon>eudicotyledons</taxon>
        <taxon>Gunneridae</taxon>
        <taxon>Pentapetalae</taxon>
        <taxon>rosids</taxon>
        <taxon>malvids</taxon>
        <taxon>Brassicales</taxon>
        <taxon>Brassicaceae</taxon>
        <taxon>Camelineae</taxon>
        <taxon>Arabidopsis</taxon>
    </lineage>
</organism>
<accession>Q9M038</accession>
<accession>Q8LAN8</accession>
<proteinExistence type="evidence at transcript level"/>
<comment type="function">
    <text evidence="3">May transport cytoplasmic succinate, derived from fatty acid oxidation, into the mitochondrial matrix in exchange of fumarate during lipid mobilization in seed germination. Conversion of seed-reserved triacylglycerols into sucrose is necessary for growth before the onset of photosynthesis and involves fatty acid beta-oxidation, the glyoxylate cycle and gluconeogenesis.</text>
</comment>
<comment type="subcellular location">
    <subcellularLocation>
        <location evidence="1">Mitochondrion inner membrane</location>
        <topology evidence="1">Multi-pass membrane protein</topology>
    </subcellularLocation>
</comment>
<comment type="tissue specificity">
    <text evidence="3">Expressed in root tips, cotyledons, hypocotyls, leaves, trichomes, stems, flowers, carpels, anthers, pollen and abscission zone of siliques.</text>
</comment>
<comment type="similarity">
    <text evidence="4">Belongs to the mitochondrial carrier (TC 2.A.29) family.</text>
</comment>
<comment type="sequence caution" evidence="4">
    <conflict type="erroneous initiation">
        <sequence resource="EMBL-CDS" id="AAM65239"/>
    </conflict>
    <text>Truncated N-terminus.</text>
</comment>
<gene>
    <name type="primary">SFC1</name>
    <name type="ordered locus">At5g01340</name>
    <name type="ORF">T10O8.50</name>
</gene>
<sequence length="309" mass="33991">MATRTESKKQIPPYMKAVSGSLGGVVEACCLQPIDVIKTRLQLDRVGAYKGIAHCGSKVVRTEGVRALWKGLTPFATHLTLKYTLRMGSNAMFQTAFKDSETGKVSNRGRFLSGFGAGVLEALAIVTPFEVVKIRLQQQKGLSPELFKYKGPIHCARTIVREESILGLWSGAAPTVMRNGTNQAVMFTAKNAFDILLWNKHEGDGKILQPWQSMISGFLAGTAGPFCTGPFDVVKTRLMAQSRDSEGGIRYKGMVHAIRTIYAEEGLVALWRGLLPRLMRIPPGQAIMWAVADQVTGLYEMRYLRNAPL</sequence>
<evidence type="ECO:0000250" key="1"/>
<evidence type="ECO:0000255" key="2"/>
<evidence type="ECO:0000269" key="3">
    <source>
    </source>
</evidence>
<evidence type="ECO:0000305" key="4"/>
<dbReference type="EMBL" id="AL161746">
    <property type="protein sequence ID" value="CAB81917.1"/>
    <property type="molecule type" value="Genomic_DNA"/>
</dbReference>
<dbReference type="EMBL" id="CP002688">
    <property type="protein sequence ID" value="AED90329.1"/>
    <property type="molecule type" value="Genomic_DNA"/>
</dbReference>
<dbReference type="EMBL" id="AY052716">
    <property type="protein sequence ID" value="AAK96620.1"/>
    <property type="molecule type" value="mRNA"/>
</dbReference>
<dbReference type="EMBL" id="AY098957">
    <property type="protein sequence ID" value="AAM19967.1"/>
    <property type="molecule type" value="mRNA"/>
</dbReference>
<dbReference type="EMBL" id="AY087702">
    <property type="protein sequence ID" value="AAM65239.1"/>
    <property type="status" value="ALT_INIT"/>
    <property type="molecule type" value="mRNA"/>
</dbReference>
<dbReference type="PIR" id="T48156">
    <property type="entry name" value="T48156"/>
</dbReference>
<dbReference type="SMR" id="Q9M038"/>
<dbReference type="BioGRID" id="16755">
    <property type="interactions" value="1"/>
</dbReference>
<dbReference type="FunCoup" id="Q9M038">
    <property type="interactions" value="2165"/>
</dbReference>
<dbReference type="STRING" id="3702.Q9M038"/>
<dbReference type="PaxDb" id="3702-AT5G01340.1"/>
<dbReference type="ProteomicsDB" id="232583"/>
<dbReference type="DNASU" id="831479"/>
<dbReference type="EnsemblPlants" id="AT5G01340.1">
    <property type="protein sequence ID" value="AT5G01340.1"/>
    <property type="gene ID" value="AT5G01340"/>
</dbReference>
<dbReference type="GeneID" id="831479"/>
<dbReference type="Gramene" id="AT5G01340.1">
    <property type="protein sequence ID" value="AT5G01340.1"/>
    <property type="gene ID" value="AT5G01340"/>
</dbReference>
<dbReference type="KEGG" id="ath:AT5G01340"/>
<dbReference type="Araport" id="AT5G01340"/>
<dbReference type="TAIR" id="AT5G01340">
    <property type="gene designation" value="MSFC1"/>
</dbReference>
<dbReference type="eggNOG" id="KOG0756">
    <property type="taxonomic scope" value="Eukaryota"/>
</dbReference>
<dbReference type="HOGENOM" id="CLU_015166_5_0_1"/>
<dbReference type="InParanoid" id="Q9M038"/>
<dbReference type="OMA" id="LPFQYQF"/>
<dbReference type="PhylomeDB" id="Q9M038"/>
<dbReference type="PRO" id="PR:Q9M038"/>
<dbReference type="Proteomes" id="UP000006548">
    <property type="component" value="Chromosome 5"/>
</dbReference>
<dbReference type="ExpressionAtlas" id="Q9M038">
    <property type="expression patterns" value="baseline and differential"/>
</dbReference>
<dbReference type="GO" id="GO:0005743">
    <property type="term" value="C:mitochondrial inner membrane"/>
    <property type="evidence" value="ECO:0007669"/>
    <property type="project" value="UniProtKB-SubCell"/>
</dbReference>
<dbReference type="GO" id="GO:0031966">
    <property type="term" value="C:mitochondrial membrane"/>
    <property type="evidence" value="ECO:0000314"/>
    <property type="project" value="TAIR"/>
</dbReference>
<dbReference type="GO" id="GO:0015141">
    <property type="term" value="F:succinate transmembrane transporter activity"/>
    <property type="evidence" value="ECO:0000316"/>
    <property type="project" value="TAIR"/>
</dbReference>
<dbReference type="GO" id="GO:0015742">
    <property type="term" value="P:alpha-ketoglutarate transport"/>
    <property type="evidence" value="ECO:0000314"/>
    <property type="project" value="TAIR"/>
</dbReference>
<dbReference type="GO" id="GO:0015746">
    <property type="term" value="P:citrate transport"/>
    <property type="evidence" value="ECO:0000314"/>
    <property type="project" value="TAIR"/>
</dbReference>
<dbReference type="GO" id="GO:0015743">
    <property type="term" value="P:malate transport"/>
    <property type="evidence" value="ECO:0000314"/>
    <property type="project" value="TAIR"/>
</dbReference>
<dbReference type="GO" id="GO:0015744">
    <property type="term" value="P:succinate transport"/>
    <property type="evidence" value="ECO:0000314"/>
    <property type="project" value="TAIR"/>
</dbReference>
<dbReference type="FunFam" id="1.50.40.10:FF:000082">
    <property type="entry name" value="Mitochondrial succinate-fumarate transporter 1"/>
    <property type="match status" value="1"/>
</dbReference>
<dbReference type="Gene3D" id="1.50.40.10">
    <property type="entry name" value="Mitochondrial carrier domain"/>
    <property type="match status" value="1"/>
</dbReference>
<dbReference type="InterPro" id="IPR018108">
    <property type="entry name" value="Mitochondrial_sb/sol_carrier"/>
</dbReference>
<dbReference type="InterPro" id="IPR023395">
    <property type="entry name" value="Mt_carrier_dom_sf"/>
</dbReference>
<dbReference type="InterPro" id="IPR049563">
    <property type="entry name" value="TXTP-like"/>
</dbReference>
<dbReference type="PANTHER" id="PTHR45788">
    <property type="entry name" value="SUCCINATE/FUMARATE MITOCHONDRIAL TRANSPORTER-RELATED"/>
    <property type="match status" value="1"/>
</dbReference>
<dbReference type="PANTHER" id="PTHR45788:SF2">
    <property type="entry name" value="SUCCINATE_FUMARATE MITOCHONDRIAL TRANSPORTER"/>
    <property type="match status" value="1"/>
</dbReference>
<dbReference type="Pfam" id="PF00153">
    <property type="entry name" value="Mito_carr"/>
    <property type="match status" value="3"/>
</dbReference>
<dbReference type="SUPFAM" id="SSF103506">
    <property type="entry name" value="Mitochondrial carrier"/>
    <property type="match status" value="1"/>
</dbReference>
<dbReference type="PROSITE" id="PS50920">
    <property type="entry name" value="SOLCAR"/>
    <property type="match status" value="3"/>
</dbReference>
<feature type="chain" id="PRO_0000420760" description="Mitochondrial succinate-fumarate transporter 1">
    <location>
        <begin position="1"/>
        <end position="309"/>
    </location>
</feature>
<feature type="transmembrane region" description="Helical; Name=1" evidence="2">
    <location>
        <begin position="17"/>
        <end position="37"/>
    </location>
</feature>
<feature type="transmembrane region" description="Helical; Name=2" evidence="2">
    <location>
        <begin position="65"/>
        <end position="85"/>
    </location>
</feature>
<feature type="transmembrane region" description="Helical; Name=3" evidence="2">
    <location>
        <begin position="111"/>
        <end position="131"/>
    </location>
</feature>
<feature type="transmembrane region" description="Helical; Name=4" evidence="2">
    <location>
        <begin position="171"/>
        <end position="191"/>
    </location>
</feature>
<feature type="transmembrane region" description="Helical; Name=5" evidence="2">
    <location>
        <begin position="214"/>
        <end position="234"/>
    </location>
</feature>
<feature type="transmembrane region" description="Helical; Name=6" evidence="2">
    <location>
        <begin position="273"/>
        <end position="293"/>
    </location>
</feature>
<feature type="repeat" description="Solcar 1">
    <location>
        <begin position="11"/>
        <end position="96"/>
    </location>
</feature>
<feature type="repeat" description="Solcar 2">
    <location>
        <begin position="108"/>
        <end position="196"/>
    </location>
</feature>
<feature type="repeat" description="Solcar 3">
    <location>
        <begin position="208"/>
        <end position="298"/>
    </location>
</feature>
<feature type="sequence conflict" description="In Ref. 4; AAM65239." evidence="4" ref="4">
    <original>K</original>
    <variation>T</variation>
    <location>
        <position position="58"/>
    </location>
</feature>